<comment type="similarity">
    <text evidence="1">Belongs to the eukaryotic ribosomal protein eS4 family.</text>
</comment>
<protein>
    <recommendedName>
        <fullName evidence="1">Small ribosomal subunit protein eS4, Y isoform 1</fullName>
    </recommendedName>
    <alternativeName>
        <fullName>40S ribosomal protein S4, Y isoform 1</fullName>
    </alternativeName>
</protein>
<accession>O62739</accession>
<gene>
    <name type="primary">RPS4Y1</name>
    <name type="synonym">RPS4Y</name>
</gene>
<name>RS4Y1_MONDO</name>
<dbReference type="EMBL" id="AF051137">
    <property type="protein sequence ID" value="AAC32106.1"/>
    <property type="molecule type" value="mRNA"/>
</dbReference>
<dbReference type="RefSeq" id="NP_001028160.1">
    <property type="nucleotide sequence ID" value="NM_001032988.1"/>
</dbReference>
<dbReference type="RefSeq" id="XP_007494098.1">
    <property type="nucleotide sequence ID" value="XM_007494036.1"/>
</dbReference>
<dbReference type="RefSeq" id="XP_016288592.1">
    <property type="nucleotide sequence ID" value="XM_016433106.2"/>
</dbReference>
<dbReference type="SMR" id="O62739"/>
<dbReference type="FunCoup" id="O62739">
    <property type="interactions" value="1211"/>
</dbReference>
<dbReference type="STRING" id="13616.ENSMODP00000035246"/>
<dbReference type="Ensembl" id="ENSMODT00000036834.1">
    <property type="protein sequence ID" value="ENSMODP00000035246.1"/>
    <property type="gene ID" value="ENSMODG00000050971.1"/>
</dbReference>
<dbReference type="GeneID" id="554196"/>
<dbReference type="KEGG" id="mdo:554196"/>
<dbReference type="CTD" id="6192"/>
<dbReference type="eggNOG" id="KOG0378">
    <property type="taxonomic scope" value="Eukaryota"/>
</dbReference>
<dbReference type="GeneTree" id="ENSGT00390000005569"/>
<dbReference type="HOGENOM" id="CLU_060400_1_0_1"/>
<dbReference type="InParanoid" id="O62739"/>
<dbReference type="OMA" id="GHIQLNL"/>
<dbReference type="OrthoDB" id="9434181at2759"/>
<dbReference type="TreeFam" id="TF300612"/>
<dbReference type="Proteomes" id="UP000002280">
    <property type="component" value="Chromosome 4"/>
</dbReference>
<dbReference type="Bgee" id="ENSMODG00000050971">
    <property type="expression patterns" value="Expressed in forelimb bud and 21 other cell types or tissues"/>
</dbReference>
<dbReference type="GO" id="GO:0022627">
    <property type="term" value="C:cytosolic small ribosomal subunit"/>
    <property type="evidence" value="ECO:0000318"/>
    <property type="project" value="GO_Central"/>
</dbReference>
<dbReference type="GO" id="GO:0003723">
    <property type="term" value="F:RNA binding"/>
    <property type="evidence" value="ECO:0000318"/>
    <property type="project" value="GO_Central"/>
</dbReference>
<dbReference type="GO" id="GO:0019843">
    <property type="term" value="F:rRNA binding"/>
    <property type="evidence" value="ECO:0007669"/>
    <property type="project" value="UniProtKB-KW"/>
</dbReference>
<dbReference type="GO" id="GO:0003735">
    <property type="term" value="F:structural constituent of ribosome"/>
    <property type="evidence" value="ECO:0000318"/>
    <property type="project" value="GO_Central"/>
</dbReference>
<dbReference type="GO" id="GO:0006412">
    <property type="term" value="P:translation"/>
    <property type="evidence" value="ECO:0000318"/>
    <property type="project" value="GO_Central"/>
</dbReference>
<dbReference type="CDD" id="cd06087">
    <property type="entry name" value="KOW_RPS4"/>
    <property type="match status" value="1"/>
</dbReference>
<dbReference type="CDD" id="cd00165">
    <property type="entry name" value="S4"/>
    <property type="match status" value="1"/>
</dbReference>
<dbReference type="FunFam" id="2.30.30.30:FF:000005">
    <property type="entry name" value="40S ribosomal protein S4"/>
    <property type="match status" value="1"/>
</dbReference>
<dbReference type="FunFam" id="2.40.50.740:FF:000001">
    <property type="entry name" value="40S ribosomal protein S4"/>
    <property type="match status" value="1"/>
</dbReference>
<dbReference type="FunFam" id="3.10.290.10:FF:000051">
    <property type="entry name" value="40S ribosomal protein S4, X isoform"/>
    <property type="match status" value="1"/>
</dbReference>
<dbReference type="Gene3D" id="2.30.30.30">
    <property type="match status" value="1"/>
</dbReference>
<dbReference type="Gene3D" id="2.40.50.740">
    <property type="match status" value="1"/>
</dbReference>
<dbReference type="Gene3D" id="3.10.290.10">
    <property type="entry name" value="RNA-binding S4 domain"/>
    <property type="match status" value="1"/>
</dbReference>
<dbReference type="HAMAP" id="MF_00485">
    <property type="entry name" value="Ribosomal_eS4"/>
    <property type="match status" value="1"/>
</dbReference>
<dbReference type="InterPro" id="IPR005824">
    <property type="entry name" value="KOW"/>
</dbReference>
<dbReference type="InterPro" id="IPR014722">
    <property type="entry name" value="Rib_uL2_dom2"/>
</dbReference>
<dbReference type="InterPro" id="IPR000876">
    <property type="entry name" value="Ribosomal_eS4"/>
</dbReference>
<dbReference type="InterPro" id="IPR032277">
    <property type="entry name" value="Ribosomal_eS4_C"/>
</dbReference>
<dbReference type="InterPro" id="IPR013845">
    <property type="entry name" value="Ribosomal_eS4_central_region"/>
</dbReference>
<dbReference type="InterPro" id="IPR038237">
    <property type="entry name" value="Ribosomal_eS4_central_sf"/>
</dbReference>
<dbReference type="InterPro" id="IPR041982">
    <property type="entry name" value="Ribosomal_eS4_KOW"/>
</dbReference>
<dbReference type="InterPro" id="IPR013843">
    <property type="entry name" value="Ribosomal_eS4_N"/>
</dbReference>
<dbReference type="InterPro" id="IPR018199">
    <property type="entry name" value="Ribosomal_eS4_N_CS"/>
</dbReference>
<dbReference type="InterPro" id="IPR002942">
    <property type="entry name" value="S4_RNA-bd"/>
</dbReference>
<dbReference type="InterPro" id="IPR036986">
    <property type="entry name" value="S4_RNA-bd_sf"/>
</dbReference>
<dbReference type="PANTHER" id="PTHR11581">
    <property type="entry name" value="30S/40S RIBOSOMAL PROTEIN S4"/>
    <property type="match status" value="1"/>
</dbReference>
<dbReference type="PANTHER" id="PTHR11581:SF0">
    <property type="entry name" value="SMALL RIBOSOMAL SUBUNIT PROTEIN ES4"/>
    <property type="match status" value="1"/>
</dbReference>
<dbReference type="Pfam" id="PF16121">
    <property type="entry name" value="40S_S4_C"/>
    <property type="match status" value="1"/>
</dbReference>
<dbReference type="Pfam" id="PF00467">
    <property type="entry name" value="KOW"/>
    <property type="match status" value="1"/>
</dbReference>
<dbReference type="Pfam" id="PF00900">
    <property type="entry name" value="Ribosomal_S4e"/>
    <property type="match status" value="1"/>
</dbReference>
<dbReference type="Pfam" id="PF08071">
    <property type="entry name" value="RS4NT"/>
    <property type="match status" value="1"/>
</dbReference>
<dbReference type="PIRSF" id="PIRSF002116">
    <property type="entry name" value="Ribosomal_S4"/>
    <property type="match status" value="1"/>
</dbReference>
<dbReference type="SMART" id="SM00363">
    <property type="entry name" value="S4"/>
    <property type="match status" value="1"/>
</dbReference>
<dbReference type="PROSITE" id="PS00528">
    <property type="entry name" value="RIBOSOMAL_S4E"/>
    <property type="match status" value="1"/>
</dbReference>
<dbReference type="PROSITE" id="PS50889">
    <property type="entry name" value="S4"/>
    <property type="match status" value="1"/>
</dbReference>
<organism>
    <name type="scientific">Monodelphis domestica</name>
    <name type="common">Gray short-tailed opossum</name>
    <dbReference type="NCBI Taxonomy" id="13616"/>
    <lineage>
        <taxon>Eukaryota</taxon>
        <taxon>Metazoa</taxon>
        <taxon>Chordata</taxon>
        <taxon>Craniata</taxon>
        <taxon>Vertebrata</taxon>
        <taxon>Euteleostomi</taxon>
        <taxon>Mammalia</taxon>
        <taxon>Metatheria</taxon>
        <taxon>Didelphimorphia</taxon>
        <taxon>Didelphidae</taxon>
        <taxon>Monodelphis</taxon>
    </lineage>
</organism>
<feature type="chain" id="PRO_0000130814" description="Small ribosomal subunit protein eS4, Y isoform 1">
    <location>
        <begin position="1"/>
        <end position="263"/>
    </location>
</feature>
<feature type="domain" description="S4 RNA-binding">
    <location>
        <begin position="42"/>
        <end position="104"/>
    </location>
</feature>
<reference key="1">
    <citation type="journal article" date="1998" name="Nature">
        <title>A proposed path by which genes common to mammalian X and Y chromosomes evolve to become X inactivated.</title>
        <authorList>
            <person name="Jegalian K.G."/>
            <person name="Page D.C."/>
        </authorList>
    </citation>
    <scope>NUCLEOTIDE SEQUENCE [MRNA]</scope>
    <source>
        <tissue>Spleen</tissue>
    </source>
</reference>
<keyword id="KW-1185">Reference proteome</keyword>
<keyword id="KW-0687">Ribonucleoprotein</keyword>
<keyword id="KW-0689">Ribosomal protein</keyword>
<keyword id="KW-0694">RNA-binding</keyword>
<keyword id="KW-0699">rRNA-binding</keyword>
<evidence type="ECO:0000305" key="1"/>
<proteinExistence type="evidence at transcript level"/>
<sequence>MARGPKKHLKRVAAPKHWMLDKLTGVFAPRPSTGPHKLRECLPLIIFLRNRLKYALTGDEVKKICMQRFIKIDGKVRTDITYPAGFMDVISIEKTGEHFRLVYDTKGRFAVHRITAEEAKYKLCKVRKIFVATKGIPHLVTHDARTIRYPDPLIKVNDTVQINLETGKITDFIKFDTGNLCMVTGGANLGRIGVITNREKHPGSFDVVHVKDANGNSFATRLSNIFVIGKGNKPWISLPRGKGIRLTIAEERDKRLAAKQSSG</sequence>